<protein>
    <recommendedName>
        <fullName>Desiccation-related protein clone PCC6-19</fullName>
    </recommendedName>
    <alternativeName>
        <fullName>CDET6-19</fullName>
    </alternativeName>
</protein>
<proteinExistence type="evidence at transcript level"/>
<organism>
    <name type="scientific">Craterostigma plantagineum</name>
    <name type="common">Blue gem</name>
    <name type="synonym">Torenia plantagineum</name>
    <dbReference type="NCBI Taxonomy" id="4153"/>
    <lineage>
        <taxon>Eukaryota</taxon>
        <taxon>Viridiplantae</taxon>
        <taxon>Streptophyta</taxon>
        <taxon>Embryophyta</taxon>
        <taxon>Tracheophyta</taxon>
        <taxon>Spermatophyta</taxon>
        <taxon>Magnoliopsida</taxon>
        <taxon>eudicotyledons</taxon>
        <taxon>Gunneridae</taxon>
        <taxon>Pentapetalae</taxon>
        <taxon>asterids</taxon>
        <taxon>lamiids</taxon>
        <taxon>Lamiales</taxon>
        <taxon>Linderniaceae</taxon>
        <taxon>Craterostigma</taxon>
    </lineage>
</organism>
<keyword id="KW-0346">Stress response</keyword>
<accession>P22239</accession>
<reference key="1">
    <citation type="journal article" date="1990" name="Plant Physiol.">
        <title>Characterization of five abscisic acid-responsive cDNA clones isolated from the desiccation-tolerant plant Craterostigma plantagineum and their relationship to other water-stress genes.</title>
        <authorList>
            <person name="Piatkowski D."/>
            <person name="Schneider K."/>
            <person name="Salamini F."/>
            <person name="Bartels D."/>
        </authorList>
    </citation>
    <scope>NUCLEOTIDE SEQUENCE [MRNA]</scope>
    <source>
        <tissue>Leaf</tissue>
    </source>
</reference>
<reference key="2">
    <citation type="journal article" date="1994" name="Plant Mol. Biol.">
        <title>Structure and regulation of an ABA- and desiccation-responsive gene from the resurrection plant Craterostigma plantagineum.</title>
        <authorList>
            <person name="Michel D."/>
            <person name="Furini A."/>
            <person name="Salamini F."/>
            <person name="Bartels D."/>
        </authorList>
    </citation>
    <scope>NUCLEOTIDE SEQUENCE [GENOMIC DNA]</scope>
</reference>
<feature type="chain" id="PRO_0000100042" description="Desiccation-related protein clone PCC6-19">
    <location>
        <begin position="1"/>
        <end position="155"/>
    </location>
</feature>
<feature type="region of interest" description="Disordered" evidence="1">
    <location>
        <begin position="1"/>
        <end position="155"/>
    </location>
</feature>
<feature type="compositionally biased region" description="Gly residues" evidence="1">
    <location>
        <begin position="27"/>
        <end position="39"/>
    </location>
</feature>
<feature type="compositionally biased region" description="Gly residues" evidence="1">
    <location>
        <begin position="47"/>
        <end position="76"/>
    </location>
</feature>
<feature type="compositionally biased region" description="Low complexity" evidence="1">
    <location>
        <begin position="83"/>
        <end position="92"/>
    </location>
</feature>
<feature type="compositionally biased region" description="Polar residues" evidence="1">
    <location>
        <begin position="118"/>
        <end position="135"/>
    </location>
</feature>
<feature type="compositionally biased region" description="Basic and acidic residues" evidence="1">
    <location>
        <begin position="136"/>
        <end position="155"/>
    </location>
</feature>
<evidence type="ECO:0000256" key="1">
    <source>
        <dbReference type="SAM" id="MobiDB-lite"/>
    </source>
</evidence>
<evidence type="ECO:0000305" key="2"/>
<comment type="induction">
    <text>By desiccation (leaves) and by abscisic acid (ABA) (leaves and callus).</text>
</comment>
<comment type="similarity">
    <text evidence="2">Belongs to the plant dehydrin family.</text>
</comment>
<sequence>MAQFGGEKYGGRHTDEYGNPIQQGAGAHRGGGIMGGGQQAGQHGTTGVLGHGTAGQHGTTGGGLGHGTAGTGGALGGQHRRSGSSSSSSSSESDGEGGRRKKGMKDKMKEKLPGGHGTTTDQQQYGTAATHGQAQQHEKKGIMDKIKEKLPGGQH</sequence>
<name>DHB_CRAPL</name>
<dbReference type="EMBL" id="M62988">
    <property type="protein sequence ID" value="AAA63613.1"/>
    <property type="molecule type" value="mRNA"/>
</dbReference>
<dbReference type="EMBL" id="X74067">
    <property type="protein sequence ID" value="CAB59720.1"/>
    <property type="molecule type" value="Genomic_DNA"/>
</dbReference>
<dbReference type="PIR" id="S43775">
    <property type="entry name" value="S43775"/>
</dbReference>
<dbReference type="GO" id="GO:0005829">
    <property type="term" value="C:cytosol"/>
    <property type="evidence" value="ECO:0007669"/>
    <property type="project" value="TreeGrafter"/>
</dbReference>
<dbReference type="GO" id="GO:0071465">
    <property type="term" value="P:cellular response to desiccation"/>
    <property type="evidence" value="ECO:0000314"/>
    <property type="project" value="CAFA"/>
</dbReference>
<dbReference type="GO" id="GO:1902075">
    <property type="term" value="P:cellular response to salt"/>
    <property type="evidence" value="ECO:0000314"/>
    <property type="project" value="CAFA"/>
</dbReference>
<dbReference type="GO" id="GO:0009631">
    <property type="term" value="P:cold acclimation"/>
    <property type="evidence" value="ECO:0007669"/>
    <property type="project" value="TreeGrafter"/>
</dbReference>
<dbReference type="GO" id="GO:0009737">
    <property type="term" value="P:response to abscisic acid"/>
    <property type="evidence" value="ECO:0007669"/>
    <property type="project" value="TreeGrafter"/>
</dbReference>
<dbReference type="GO" id="GO:0009611">
    <property type="term" value="P:response to wounding"/>
    <property type="evidence" value="ECO:0000314"/>
    <property type="project" value="CAFA"/>
</dbReference>
<dbReference type="DisProt" id="DP00112"/>
<dbReference type="InterPro" id="IPR000167">
    <property type="entry name" value="Dehydrin"/>
</dbReference>
<dbReference type="InterPro" id="IPR030513">
    <property type="entry name" value="Dehydrin_CS"/>
</dbReference>
<dbReference type="PANTHER" id="PTHR33346:SF42">
    <property type="entry name" value="DEHYDRIN XERO 1"/>
    <property type="match status" value="1"/>
</dbReference>
<dbReference type="PANTHER" id="PTHR33346">
    <property type="entry name" value="DEHYDRIN XERO 2-RELATED"/>
    <property type="match status" value="1"/>
</dbReference>
<dbReference type="Pfam" id="PF00257">
    <property type="entry name" value="Dehydrin"/>
    <property type="match status" value="1"/>
</dbReference>
<dbReference type="PROSITE" id="PS00315">
    <property type="entry name" value="DEHYDRIN_1"/>
    <property type="match status" value="1"/>
</dbReference>
<dbReference type="PROSITE" id="PS00823">
    <property type="entry name" value="DEHYDRIN_2"/>
    <property type="match status" value="2"/>
</dbReference>